<evidence type="ECO:0000250" key="1"/>
<evidence type="ECO:0000255" key="2"/>
<evidence type="ECO:0000269" key="3">
    <source>
    </source>
</evidence>
<proteinExistence type="evidence at protein level"/>
<protein>
    <recommendedName>
        <fullName>Variant surface glycoprotein MITAT 1.6</fullName>
        <shortName>VSG</shortName>
    </recommendedName>
</protein>
<accession>P26334</accession>
<feature type="signal peptide">
    <location>
        <begin position="1"/>
        <end position="24"/>
    </location>
</feature>
<feature type="chain" id="PRO_0000036439" description="Variant surface glycoprotein MITAT 1.6">
    <location>
        <begin position="25"/>
        <end position="506"/>
    </location>
</feature>
<feature type="propeptide" id="PRO_0000036440" description="Removed in mature form" evidence="2">
    <location>
        <begin position="507"/>
        <end position="529"/>
    </location>
</feature>
<feature type="lipid moiety-binding region" description="GPI-anchor amidated aspartate" evidence="2">
    <location>
        <position position="506"/>
    </location>
</feature>
<feature type="glycosylation site" id="CAR_000142" description="N-linked (GlcNAc...) (high mannose) asparagine" evidence="3">
    <location>
        <position position="456"/>
    </location>
</feature>
<feature type="disulfide bond" evidence="1">
    <location>
        <begin position="39"/>
        <end position="170"/>
    </location>
</feature>
<feature type="disulfide bond" evidence="1">
    <location>
        <begin position="147"/>
        <end position="214"/>
    </location>
</feature>
<organism>
    <name type="scientific">Trypanosoma brucei brucei</name>
    <dbReference type="NCBI Taxonomy" id="5702"/>
    <lineage>
        <taxon>Eukaryota</taxon>
        <taxon>Discoba</taxon>
        <taxon>Euglenozoa</taxon>
        <taxon>Kinetoplastea</taxon>
        <taxon>Metakinetoplastina</taxon>
        <taxon>Trypanosomatida</taxon>
        <taxon>Trypanosomatidae</taxon>
        <taxon>Trypanosoma</taxon>
    </lineage>
</organism>
<comment type="function">
    <text>VSG forms a coat on the surface of the parasite. The trypanosome evades the immune response of the host by expressing a series of antigenically distinct VSGs from an estimated 1000 VSG genes.</text>
</comment>
<comment type="subcellular location">
    <subcellularLocation>
        <location>Cell membrane</location>
        <topology>Lipid-anchor</topology>
        <topology>GPI-anchor</topology>
    </subcellularLocation>
    <text evidence="1">A soluble form is released from ruptured cells by the action of a PI-PLC.</text>
</comment>
<comment type="PTM">
    <text evidence="3">N-glycosylated; glycan is composed of 6 to 9 mannose residues.</text>
</comment>
<reference key="1">
    <citation type="journal article" date="1991" name="J. Mol. Biol.">
        <title>Variant specific glycoprotein of Trypanosoma brucei consists of two domains each having an independently conserved pattern of cysteine residues.</title>
        <authorList>
            <person name="Carrington M."/>
            <person name="Miller N."/>
            <person name="Blum M.L."/>
            <person name="Roditi I."/>
            <person name="Wiley D.C."/>
            <person name="Turner M.J."/>
        </authorList>
    </citation>
    <scope>NUCLEOTIDE SEQUENCE [MRNA]</scope>
    <source>
        <strain>Isolate MIAG 151</strain>
    </source>
</reference>
<reference key="2">
    <citation type="journal article" date="1993" name="Biochem. Biophys. Res. Commun.">
        <title>The carbohydrate structures of Trypanosoma brucei brucei MITat 1.6 variant surface glycoprotein. A re-investigation of the C-terminal glycan.</title>
        <authorList>
            <person name="Strang A.M."/>
            <person name="Allen A.K."/>
            <person name="Holder A.A."/>
            <person name="van Halbeek H."/>
        </authorList>
    </citation>
    <scope>GLYCOSYLATION AT ASN-456</scope>
    <scope>STRUCTURE OF CARBOHYDRATE</scope>
</reference>
<name>VSM6_TRYBB</name>
<dbReference type="EMBL" id="X56764">
    <property type="protein sequence ID" value="CAA40083.1"/>
    <property type="molecule type" value="mRNA"/>
</dbReference>
<dbReference type="PIR" id="S18453">
    <property type="entry name" value="S18453"/>
</dbReference>
<dbReference type="SMR" id="P26334"/>
<dbReference type="GlyConnect" id="616">
    <property type="glycosylation" value="8 N-Linked glycans (1 site)"/>
</dbReference>
<dbReference type="GO" id="GO:0005886">
    <property type="term" value="C:plasma membrane"/>
    <property type="evidence" value="ECO:0007669"/>
    <property type="project" value="UniProtKB-SubCell"/>
</dbReference>
<dbReference type="GO" id="GO:0098552">
    <property type="term" value="C:side of membrane"/>
    <property type="evidence" value="ECO:0007669"/>
    <property type="project" value="UniProtKB-KW"/>
</dbReference>
<dbReference type="GO" id="GO:0042783">
    <property type="term" value="P:symbiont-mediated evasion of host immune response"/>
    <property type="evidence" value="ECO:0007669"/>
    <property type="project" value="InterPro"/>
</dbReference>
<dbReference type="Gene3D" id="3.30.1680.30">
    <property type="match status" value="1"/>
</dbReference>
<dbReference type="Gene3D" id="3.30.1680.40">
    <property type="match status" value="1"/>
</dbReference>
<dbReference type="Gene3D" id="3.90.150.10">
    <property type="entry name" value="Variant Surface Glycoprotein, subunit A domain 1"/>
    <property type="match status" value="1"/>
</dbReference>
<dbReference type="Gene3D" id="1.10.470.10">
    <property type="entry name" value="Variant Surface Glycoprotein, subunit A, domain 2"/>
    <property type="match status" value="1"/>
</dbReference>
<dbReference type="InterPro" id="IPR001812">
    <property type="entry name" value="Trypano_VSG_A_N_dom"/>
</dbReference>
<dbReference type="InterPro" id="IPR019609">
    <property type="entry name" value="Variant_surf_glycoprt_trypan_C"/>
</dbReference>
<dbReference type="Pfam" id="PF00913">
    <property type="entry name" value="Trypan_glycop"/>
    <property type="match status" value="1"/>
</dbReference>
<dbReference type="Pfam" id="PF10659">
    <property type="entry name" value="Trypan_glycop_C"/>
    <property type="match status" value="1"/>
</dbReference>
<dbReference type="SUPFAM" id="SSF58087">
    <property type="entry name" value="Variant surface glycoprotein (N-terminal domain)"/>
    <property type="match status" value="1"/>
</dbReference>
<keyword id="KW-1003">Cell membrane</keyword>
<keyword id="KW-1015">Disulfide bond</keyword>
<keyword id="KW-0325">Glycoprotein</keyword>
<keyword id="KW-0336">GPI-anchor</keyword>
<keyword id="KW-0449">Lipoprotein</keyword>
<keyword id="KW-0472">Membrane</keyword>
<keyword id="KW-0732">Signal</keyword>
<keyword id="KW-0821">Trypanosomiasis</keyword>
<sequence>MAVHRALAAYAISLYVLLPRKSGATDKGAIKFETWEPLCLLTQDFGNLYNRAHKLNLDIDTYVTAAQADQLRLQILLSRASSKIEAAAAAAATAAIAADLAGKAKHVASCKLAATTLTATTGYLHGRIAEFLEVMTAHRGTTNKYGCLSKSRSDNSNSITDSVANLKDKCKLTVQQISPDNKATEQITKAGFTKLTATGGLTSSDLGGSGQAVCMILSTTASEVVNNGNLDEPVPYAGGYLRRKHDLTSDGNDNLATITDSASAPATRAKTDPYLQIWRAFKNLEDCESTFTSGYSRPSPETLKAADETKTAIKNYVVQKEGKYDQATDKEDDYKNLDKIFKDGKDFYPQKLWDAMDKKDLLKDATQTNEIKKLADITDRSELNKVLLYYTRQKEQTLTKELKEAQEKATQANQNDAAAKAAEDSCNKLVGGEKCNADKKCSYETETDGTKKCKFNATKAEKSGAPVTQAQTVGETEATPEKCKGKDAKTCGTTQGCKWEGETCKDSSILVTKKFALTVVSAAFVALLF</sequence>